<reference key="1">
    <citation type="journal article" date="2008" name="J. Bacteriol.">
        <title>Genome of the actinomycete plant pathogen Clavibacter michiganensis subsp. sepedonicus suggests recent niche adaptation.</title>
        <authorList>
            <person name="Bentley S.D."/>
            <person name="Corton C."/>
            <person name="Brown S.E."/>
            <person name="Barron A."/>
            <person name="Clark L."/>
            <person name="Doggett J."/>
            <person name="Harris B."/>
            <person name="Ormond D."/>
            <person name="Quail M.A."/>
            <person name="May G."/>
            <person name="Francis D."/>
            <person name="Knudson D."/>
            <person name="Parkhill J."/>
            <person name="Ishimaru C.A."/>
        </authorList>
    </citation>
    <scope>NUCLEOTIDE SEQUENCE [LARGE SCALE GENOMIC DNA]</scope>
    <source>
        <strain>ATCC 33113 / DSM 20744 / JCM 9667 / LMG 2889 / ICMP 2535 / C-1</strain>
    </source>
</reference>
<proteinExistence type="inferred from homology"/>
<evidence type="ECO:0000255" key="1">
    <source>
        <dbReference type="HAMAP-Rule" id="MF_01368"/>
    </source>
</evidence>
<evidence type="ECO:0000256" key="2">
    <source>
        <dbReference type="SAM" id="MobiDB-lite"/>
    </source>
</evidence>
<evidence type="ECO:0000305" key="3"/>
<gene>
    <name evidence="1" type="primary">rplQ</name>
    <name type="ordered locus">CMS0317</name>
</gene>
<protein>
    <recommendedName>
        <fullName evidence="1">Large ribosomal subunit protein bL17</fullName>
    </recommendedName>
    <alternativeName>
        <fullName evidence="3">50S ribosomal protein L17</fullName>
    </alternativeName>
</protein>
<name>RL17_CLASE</name>
<keyword id="KW-0687">Ribonucleoprotein</keyword>
<keyword id="KW-0689">Ribosomal protein</keyword>
<feature type="chain" id="PRO_1000087164" description="Large ribosomal subunit protein bL17">
    <location>
        <begin position="1"/>
        <end position="187"/>
    </location>
</feature>
<feature type="region of interest" description="Disordered" evidence="2">
    <location>
        <begin position="122"/>
        <end position="187"/>
    </location>
</feature>
<feature type="compositionally biased region" description="Low complexity" evidence="2">
    <location>
        <begin position="127"/>
        <end position="144"/>
    </location>
</feature>
<feature type="compositionally biased region" description="Acidic residues" evidence="2">
    <location>
        <begin position="145"/>
        <end position="157"/>
    </location>
</feature>
<feature type="compositionally biased region" description="Low complexity" evidence="2">
    <location>
        <begin position="167"/>
        <end position="176"/>
    </location>
</feature>
<dbReference type="EMBL" id="AM849034">
    <property type="protein sequence ID" value="CAQ00438.1"/>
    <property type="molecule type" value="Genomic_DNA"/>
</dbReference>
<dbReference type="RefSeq" id="WP_012297778.1">
    <property type="nucleotide sequence ID" value="NZ_MZMN01000003.1"/>
</dbReference>
<dbReference type="SMR" id="B0RB73"/>
<dbReference type="STRING" id="31964.CMS0317"/>
<dbReference type="KEGG" id="cms:CMS0317"/>
<dbReference type="eggNOG" id="COG0203">
    <property type="taxonomic scope" value="Bacteria"/>
</dbReference>
<dbReference type="HOGENOM" id="CLU_074407_0_0_11"/>
<dbReference type="OrthoDB" id="9809073at2"/>
<dbReference type="Proteomes" id="UP000001318">
    <property type="component" value="Chromosome"/>
</dbReference>
<dbReference type="GO" id="GO:0022625">
    <property type="term" value="C:cytosolic large ribosomal subunit"/>
    <property type="evidence" value="ECO:0007669"/>
    <property type="project" value="TreeGrafter"/>
</dbReference>
<dbReference type="GO" id="GO:0003735">
    <property type="term" value="F:structural constituent of ribosome"/>
    <property type="evidence" value="ECO:0007669"/>
    <property type="project" value="InterPro"/>
</dbReference>
<dbReference type="GO" id="GO:0006412">
    <property type="term" value="P:translation"/>
    <property type="evidence" value="ECO:0007669"/>
    <property type="project" value="UniProtKB-UniRule"/>
</dbReference>
<dbReference type="FunFam" id="3.90.1030.10:FF:000001">
    <property type="entry name" value="50S ribosomal protein L17"/>
    <property type="match status" value="1"/>
</dbReference>
<dbReference type="Gene3D" id="3.90.1030.10">
    <property type="entry name" value="Ribosomal protein L17"/>
    <property type="match status" value="1"/>
</dbReference>
<dbReference type="HAMAP" id="MF_01368">
    <property type="entry name" value="Ribosomal_bL17"/>
    <property type="match status" value="1"/>
</dbReference>
<dbReference type="InterPro" id="IPR000456">
    <property type="entry name" value="Ribosomal_bL17"/>
</dbReference>
<dbReference type="InterPro" id="IPR047859">
    <property type="entry name" value="Ribosomal_bL17_CS"/>
</dbReference>
<dbReference type="InterPro" id="IPR036373">
    <property type="entry name" value="Ribosomal_bL17_sf"/>
</dbReference>
<dbReference type="NCBIfam" id="TIGR00059">
    <property type="entry name" value="L17"/>
    <property type="match status" value="1"/>
</dbReference>
<dbReference type="PANTHER" id="PTHR14413:SF16">
    <property type="entry name" value="LARGE RIBOSOMAL SUBUNIT PROTEIN BL17M"/>
    <property type="match status" value="1"/>
</dbReference>
<dbReference type="PANTHER" id="PTHR14413">
    <property type="entry name" value="RIBOSOMAL PROTEIN L17"/>
    <property type="match status" value="1"/>
</dbReference>
<dbReference type="Pfam" id="PF01196">
    <property type="entry name" value="Ribosomal_L17"/>
    <property type="match status" value="1"/>
</dbReference>
<dbReference type="SUPFAM" id="SSF64263">
    <property type="entry name" value="Prokaryotic ribosomal protein L17"/>
    <property type="match status" value="1"/>
</dbReference>
<dbReference type="PROSITE" id="PS01167">
    <property type="entry name" value="RIBOSOMAL_L17"/>
    <property type="match status" value="1"/>
</dbReference>
<comment type="subunit">
    <text evidence="1">Part of the 50S ribosomal subunit. Contacts protein L32.</text>
</comment>
<comment type="similarity">
    <text evidence="1">Belongs to the bacterial ribosomal protein bL17 family.</text>
</comment>
<accession>B0RB73</accession>
<organism>
    <name type="scientific">Clavibacter sepedonicus</name>
    <name type="common">Clavibacter michiganensis subsp. sepedonicus</name>
    <dbReference type="NCBI Taxonomy" id="31964"/>
    <lineage>
        <taxon>Bacteria</taxon>
        <taxon>Bacillati</taxon>
        <taxon>Actinomycetota</taxon>
        <taxon>Actinomycetes</taxon>
        <taxon>Micrococcales</taxon>
        <taxon>Microbacteriaceae</taxon>
        <taxon>Clavibacter</taxon>
    </lineage>
</organism>
<sequence length="187" mass="20121">MPKPTKGPRLGGGPAHERLMLANLAQSLFEHKSIKTTETKAKRLRPVAERLVTFAKRGDLHARRRVMGIIPSKSVVHELFTEIAPLVAERDGGYTRITKLGFRKGDNAPMVQIELVLEPVTPKVRSSRTSTATAPVAAAPVAEAPAEESDVPVEETDAVEHTDETPAETTDAAAAEVEADAAEKSDK</sequence>